<organism>
    <name type="scientific">Rattus norvegicus</name>
    <name type="common">Rat</name>
    <dbReference type="NCBI Taxonomy" id="10116"/>
    <lineage>
        <taxon>Eukaryota</taxon>
        <taxon>Metazoa</taxon>
        <taxon>Chordata</taxon>
        <taxon>Craniata</taxon>
        <taxon>Vertebrata</taxon>
        <taxon>Euteleostomi</taxon>
        <taxon>Mammalia</taxon>
        <taxon>Eutheria</taxon>
        <taxon>Euarchontoglires</taxon>
        <taxon>Glires</taxon>
        <taxon>Rodentia</taxon>
        <taxon>Myomorpha</taxon>
        <taxon>Muroidea</taxon>
        <taxon>Muridae</taxon>
        <taxon>Murinae</taxon>
        <taxon>Rattus</taxon>
    </lineage>
</organism>
<protein>
    <recommendedName>
        <fullName>Protein THEM6</fullName>
    </recommendedName>
</protein>
<evidence type="ECO:0000250" key="1">
    <source>
        <dbReference type="UniProtKB" id="Q8WUY1"/>
    </source>
</evidence>
<evidence type="ECO:0000255" key="2"/>
<evidence type="ECO:0000305" key="3"/>
<name>THEM6_RAT</name>
<accession>Q5XIE1</accession>
<reference key="1">
    <citation type="journal article" date="2004" name="Genome Res.">
        <title>The status, quality, and expansion of the NIH full-length cDNA project: the Mammalian Gene Collection (MGC).</title>
        <authorList>
            <consortium name="The MGC Project Team"/>
        </authorList>
    </citation>
    <scope>NUCLEOTIDE SEQUENCE [LARGE SCALE MRNA]</scope>
    <source>
        <tissue>Heart</tissue>
    </source>
</reference>
<comment type="subcellular location">
    <subcellularLocation>
        <location evidence="3">Secreted</location>
    </subcellularLocation>
</comment>
<comment type="similarity">
    <text evidence="3">Belongs to the THEM6 family.</text>
</comment>
<keyword id="KW-0325">Glycoprotein</keyword>
<keyword id="KW-0597">Phosphoprotein</keyword>
<keyword id="KW-1185">Reference proteome</keyword>
<keyword id="KW-0964">Secreted</keyword>
<keyword id="KW-0732">Signal</keyword>
<dbReference type="EMBL" id="BC083742">
    <property type="protein sequence ID" value="AAH83742.1"/>
    <property type="molecule type" value="mRNA"/>
</dbReference>
<dbReference type="RefSeq" id="NP_001007659.1">
    <property type="nucleotide sequence ID" value="NM_001007658.1"/>
</dbReference>
<dbReference type="SMR" id="Q5XIE1"/>
<dbReference type="FunCoup" id="Q5XIE1">
    <property type="interactions" value="163"/>
</dbReference>
<dbReference type="STRING" id="10116.ENSRNOP00000007773"/>
<dbReference type="GlyCosmos" id="Q5XIE1">
    <property type="glycosylation" value="1 site, No reported glycans"/>
</dbReference>
<dbReference type="GlyGen" id="Q5XIE1">
    <property type="glycosylation" value="1 site"/>
</dbReference>
<dbReference type="PhosphoSitePlus" id="Q5XIE1"/>
<dbReference type="jPOST" id="Q5XIE1"/>
<dbReference type="PaxDb" id="10116-ENSRNOP00000007773"/>
<dbReference type="Ensembl" id="ENSRNOT00000007773.7">
    <property type="protein sequence ID" value="ENSRNOP00000007773.4"/>
    <property type="gene ID" value="ENSRNOG00000005929.7"/>
</dbReference>
<dbReference type="GeneID" id="300015"/>
<dbReference type="KEGG" id="rno:300015"/>
<dbReference type="UCSC" id="RGD:1359378">
    <property type="organism name" value="rat"/>
</dbReference>
<dbReference type="AGR" id="RGD:1359378"/>
<dbReference type="CTD" id="51337"/>
<dbReference type="RGD" id="1359378">
    <property type="gene designation" value="Them6"/>
</dbReference>
<dbReference type="eggNOG" id="KOG4366">
    <property type="taxonomic scope" value="Eukaryota"/>
</dbReference>
<dbReference type="GeneTree" id="ENSGT00390000004859"/>
<dbReference type="HOGENOM" id="CLU_091107_0_1_1"/>
<dbReference type="InParanoid" id="Q5XIE1"/>
<dbReference type="OMA" id="RDIDMCH"/>
<dbReference type="OrthoDB" id="265761at2759"/>
<dbReference type="PhylomeDB" id="Q5XIE1"/>
<dbReference type="TreeFam" id="TF324625"/>
<dbReference type="PRO" id="PR:Q5XIE1"/>
<dbReference type="Proteomes" id="UP000002494">
    <property type="component" value="Chromosome 7"/>
</dbReference>
<dbReference type="Bgee" id="ENSRNOG00000005929">
    <property type="expression patterns" value="Expressed in testis and 19 other cell types or tissues"/>
</dbReference>
<dbReference type="GO" id="GO:0005576">
    <property type="term" value="C:extracellular region"/>
    <property type="evidence" value="ECO:0007669"/>
    <property type="project" value="UniProtKB-SubCell"/>
</dbReference>
<dbReference type="CDD" id="cd00586">
    <property type="entry name" value="4HBT"/>
    <property type="match status" value="1"/>
</dbReference>
<dbReference type="Gene3D" id="3.10.129.10">
    <property type="entry name" value="Hotdog Thioesterase"/>
    <property type="match status" value="1"/>
</dbReference>
<dbReference type="InterPro" id="IPR029069">
    <property type="entry name" value="HotDog_dom_sf"/>
</dbReference>
<dbReference type="InterPro" id="IPR051490">
    <property type="entry name" value="THEM6_lcsJ_thioesterase"/>
</dbReference>
<dbReference type="PANTHER" id="PTHR12475">
    <property type="match status" value="1"/>
</dbReference>
<dbReference type="PANTHER" id="PTHR12475:SF4">
    <property type="entry name" value="PROTEIN THEM6"/>
    <property type="match status" value="1"/>
</dbReference>
<dbReference type="Pfam" id="PF13279">
    <property type="entry name" value="4HBT_2"/>
    <property type="match status" value="1"/>
</dbReference>
<dbReference type="SUPFAM" id="SSF54637">
    <property type="entry name" value="Thioesterase/thiol ester dehydrase-isomerase"/>
    <property type="match status" value="1"/>
</dbReference>
<proteinExistence type="evidence at transcript level"/>
<gene>
    <name type="primary">Them6</name>
</gene>
<sequence>MMELLVVSLSLALAFFALLDGWYLVRVPCAVLRARLLQPRVRDLLAEQLYAGRVLPSDLDLLLHMNNARYLREADVARAAHLTRCGVLGALRDLGAHTVLAASCARYRRSLRLFEPFEVHTRLLGWDDRAFYLEARFVSLRDGFVCALLRFRQHVLGTSPDRVVQHLCKRRVEPPELPEDLKHWITYNETSSQLLRAESGLSDRKDQ</sequence>
<feature type="signal peptide" evidence="2">
    <location>
        <begin position="1"/>
        <end position="21"/>
    </location>
</feature>
<feature type="chain" id="PRO_0000285638" description="Protein THEM6">
    <location>
        <begin position="22"/>
        <end position="207"/>
    </location>
</feature>
<feature type="modified residue" description="Phosphoserine" evidence="1">
    <location>
        <position position="199"/>
    </location>
</feature>
<feature type="glycosylation site" description="N-linked (GlcNAc...) asparagine" evidence="2">
    <location>
        <position position="188"/>
    </location>
</feature>